<sequence length="360" mass="40565">MDSSNCKVNAPLLSQRHRRMVTKDGHSTLQMDGAQRGLVYLRDAWGILMDMRWRWMMLVFSASFVVHWLVFAVLWYAVAEMNGDLEIDHDVPPENHTICVKHITSFTAAFSFSLETQLTIGYGTMFPSGDCPSAIALLAIQMLLGLMLEAFITGAFVAKIARPKNRAFSIRFTDLAVVAHKDGKPNLIFQVANTRPSPLTNVRVSAVLYQERENGELYQTSVDFHLDGISSEECPFFIFPLTYYHTISPSSPLATLLQHETPPHFELVVFLSAMQEGTGEICQRRTSYLPSEIMLHHRFAALMTRGSKGEYQVKMENFDKTVPEHPTPVVSKSPHRTDLDIHINGQSIDNFQIAETGLTE</sequence>
<reference key="1">
    <citation type="journal article" date="2009" name="PLoS Biol.">
        <title>Lineage-specific biology revealed by a finished genome assembly of the mouse.</title>
        <authorList>
            <person name="Church D.M."/>
            <person name="Goodstadt L."/>
            <person name="Hillier L.W."/>
            <person name="Zody M.C."/>
            <person name="Goldstein S."/>
            <person name="She X."/>
            <person name="Bult C.J."/>
            <person name="Agarwala R."/>
            <person name="Cherry J.L."/>
            <person name="DiCuccio M."/>
            <person name="Hlavina W."/>
            <person name="Kapustin Y."/>
            <person name="Meric P."/>
            <person name="Maglott D."/>
            <person name="Birtle Z."/>
            <person name="Marques A.C."/>
            <person name="Graves T."/>
            <person name="Zhou S."/>
            <person name="Teague B."/>
            <person name="Potamousis K."/>
            <person name="Churas C."/>
            <person name="Place M."/>
            <person name="Herschleb J."/>
            <person name="Runnheim R."/>
            <person name="Forrest D."/>
            <person name="Amos-Landgraf J."/>
            <person name="Schwartz D.C."/>
            <person name="Cheng Z."/>
            <person name="Lindblad-Toh K."/>
            <person name="Eichler E.E."/>
            <person name="Ponting C.P."/>
        </authorList>
    </citation>
    <scope>NUCLEOTIDE SEQUENCE [LARGE SCALE GENOMIC DNA]</scope>
    <source>
        <strain>C57BL/6J</strain>
    </source>
</reference>
<reference key="2">
    <citation type="journal article" date="2019" name="Biochem. Biophys. Res. Commun.">
        <title>A novel Kir7.1 splice variant expressed in various mouse tissues shares organisational and functional properties with human Leber amaurosis-causing mutations of this K+ channel.</title>
        <authorList>
            <person name="Vera E."/>
            <person name="Cornejo I."/>
            <person name="Burgos J."/>
            <person name="Niemeyer M.I."/>
            <person name="Sepulveda F.V."/>
            <person name="Cid L.P."/>
        </authorList>
    </citation>
    <scope>TRANSPORTER ACTIVITY</scope>
    <scope>SUBCELLULAR LOCATION</scope>
</reference>
<reference key="3">
    <citation type="journal article" date="2018" name="J. Biol. Chem.">
        <title>The small GTPase RAB28 is required for phagocytosis of cone outer segments by the murine retinal pigmented epithelium.</title>
        <authorList>
            <person name="Ying G."/>
            <person name="Boldt K."/>
            <person name="Ueffing M."/>
            <person name="Gerstner C.D."/>
            <person name="Frederick J.M."/>
            <person name="Baehr W."/>
        </authorList>
    </citation>
    <scope>SUBCELLULAR LOCATION</scope>
</reference>
<evidence type="ECO:0000250" key="1">
    <source>
        <dbReference type="UniProtKB" id="E1BN00"/>
    </source>
</evidence>
<evidence type="ECO:0000250" key="2">
    <source>
        <dbReference type="UniProtKB" id="O60928"/>
    </source>
</evidence>
<evidence type="ECO:0000250" key="3">
    <source>
        <dbReference type="UniProtKB" id="P49655"/>
    </source>
</evidence>
<evidence type="ECO:0000255" key="4"/>
<evidence type="ECO:0000269" key="5">
    <source>
    </source>
</evidence>
<evidence type="ECO:0000269" key="6">
    <source>
    </source>
</evidence>
<evidence type="ECO:0000305" key="7"/>
<evidence type="ECO:0000312" key="8">
    <source>
        <dbReference type="MGI" id="MGI:3781032"/>
    </source>
</evidence>
<keyword id="KW-1003">Cell membrane</keyword>
<keyword id="KW-0407">Ion channel</keyword>
<keyword id="KW-0406">Ion transport</keyword>
<keyword id="KW-0472">Membrane</keyword>
<keyword id="KW-0597">Phosphoprotein</keyword>
<keyword id="KW-0630">Potassium</keyword>
<keyword id="KW-0633">Potassium transport</keyword>
<keyword id="KW-1185">Reference proteome</keyword>
<keyword id="KW-0812">Transmembrane</keyword>
<keyword id="KW-1133">Transmembrane helix</keyword>
<keyword id="KW-0813">Transport</keyword>
<keyword id="KW-0851">Voltage-gated channel</keyword>
<protein>
    <recommendedName>
        <fullName evidence="2">Inward rectifier potassium channel 13</fullName>
    </recommendedName>
    <alternativeName>
        <fullName evidence="2">Inward rectifier K(+) channel Kir7.1</fullName>
    </alternativeName>
    <alternativeName>
        <fullName evidence="8">Potassium channel, inwardly rectifying subfamily J member 13</fullName>
    </alternativeName>
</protein>
<name>KCJ13_MOUSE</name>
<dbReference type="EMBL" id="AC157811">
    <property type="status" value="NOT_ANNOTATED_CDS"/>
    <property type="molecule type" value="Genomic_DNA"/>
</dbReference>
<dbReference type="CCDS" id="CCDS35653.1"/>
<dbReference type="RefSeq" id="NP_001103697.1">
    <property type="nucleotide sequence ID" value="NM_001110227.2"/>
</dbReference>
<dbReference type="SMR" id="P86046"/>
<dbReference type="FunCoup" id="P86046">
    <property type="interactions" value="463"/>
</dbReference>
<dbReference type="STRING" id="10090.ENSMUSP00000108838"/>
<dbReference type="iPTMnet" id="P86046"/>
<dbReference type="PhosphoSitePlus" id="P86046"/>
<dbReference type="PaxDb" id="10090-ENSMUSP00000108838"/>
<dbReference type="PeptideAtlas" id="P86046"/>
<dbReference type="ProteomicsDB" id="301768"/>
<dbReference type="Antibodypedia" id="34443">
    <property type="antibodies" value="128 antibodies from 26 providers"/>
</dbReference>
<dbReference type="Ensembl" id="ENSMUST00000113212.4">
    <property type="protein sequence ID" value="ENSMUSP00000108838.4"/>
    <property type="gene ID" value="ENSMUSG00000079436.4"/>
</dbReference>
<dbReference type="GeneID" id="100040591"/>
<dbReference type="KEGG" id="mmu:100040591"/>
<dbReference type="UCSC" id="uc007bwu.2">
    <property type="organism name" value="mouse"/>
</dbReference>
<dbReference type="AGR" id="MGI:3781032"/>
<dbReference type="CTD" id="3769"/>
<dbReference type="MGI" id="MGI:3781032">
    <property type="gene designation" value="Kcnj13"/>
</dbReference>
<dbReference type="VEuPathDB" id="HostDB:ENSMUSG00000079436"/>
<dbReference type="eggNOG" id="KOG3827">
    <property type="taxonomic scope" value="Eukaryota"/>
</dbReference>
<dbReference type="GeneTree" id="ENSGT00990000203615"/>
<dbReference type="HOGENOM" id="CLU_022738_3_3_1"/>
<dbReference type="InParanoid" id="P86046"/>
<dbReference type="OMA" id="QGQTCLM"/>
<dbReference type="OrthoDB" id="273257at2759"/>
<dbReference type="PhylomeDB" id="P86046"/>
<dbReference type="TreeFam" id="TF313676"/>
<dbReference type="BioGRID-ORCS" id="100040591">
    <property type="hits" value="1 hit in 77 CRISPR screens"/>
</dbReference>
<dbReference type="ChiTaRS" id="Kcnj13">
    <property type="organism name" value="mouse"/>
</dbReference>
<dbReference type="PRO" id="PR:P86046"/>
<dbReference type="Proteomes" id="UP000000589">
    <property type="component" value="Chromosome 1"/>
</dbReference>
<dbReference type="RNAct" id="P86046">
    <property type="molecule type" value="protein"/>
</dbReference>
<dbReference type="Bgee" id="ENSMUSG00000079436">
    <property type="expression patterns" value="Expressed in choroid plexus epithelium and 103 other cell types or tissues"/>
</dbReference>
<dbReference type="ExpressionAtlas" id="P86046">
    <property type="expression patterns" value="baseline and differential"/>
</dbReference>
<dbReference type="GO" id="GO:0034702">
    <property type="term" value="C:monoatomic ion channel complex"/>
    <property type="evidence" value="ECO:0007669"/>
    <property type="project" value="UniProtKB-KW"/>
</dbReference>
<dbReference type="GO" id="GO:0005886">
    <property type="term" value="C:plasma membrane"/>
    <property type="evidence" value="ECO:0000314"/>
    <property type="project" value="MGI"/>
</dbReference>
<dbReference type="GO" id="GO:0005242">
    <property type="term" value="F:inward rectifier potassium channel activity"/>
    <property type="evidence" value="ECO:0007669"/>
    <property type="project" value="InterPro"/>
</dbReference>
<dbReference type="GO" id="GO:0005267">
    <property type="term" value="F:potassium channel activity"/>
    <property type="evidence" value="ECO:0000314"/>
    <property type="project" value="MGI"/>
</dbReference>
<dbReference type="GO" id="GO:0071805">
    <property type="term" value="P:potassium ion transmembrane transport"/>
    <property type="evidence" value="ECO:0000314"/>
    <property type="project" value="MGI"/>
</dbReference>
<dbReference type="FunFam" id="1.10.287.70:FF:000081">
    <property type="entry name" value="inward rectifier potassium channel 13 isoform X1"/>
    <property type="match status" value="1"/>
</dbReference>
<dbReference type="FunFam" id="2.60.40.1400:FF:000004">
    <property type="entry name" value="inward rectifier potassium channel 13 isoform X1"/>
    <property type="match status" value="1"/>
</dbReference>
<dbReference type="Gene3D" id="1.10.287.70">
    <property type="match status" value="1"/>
</dbReference>
<dbReference type="Gene3D" id="2.60.40.1400">
    <property type="entry name" value="G protein-activated inward rectifier potassium channel 1"/>
    <property type="match status" value="1"/>
</dbReference>
<dbReference type="InterPro" id="IPR014756">
    <property type="entry name" value="Ig_E-set"/>
</dbReference>
<dbReference type="InterPro" id="IPR041647">
    <property type="entry name" value="IRK_C"/>
</dbReference>
<dbReference type="InterPro" id="IPR016449">
    <property type="entry name" value="K_chnl_inward-rec_Kir"/>
</dbReference>
<dbReference type="InterPro" id="IPR013518">
    <property type="entry name" value="K_chnl_inward-rec_Kir_cyto"/>
</dbReference>
<dbReference type="InterPro" id="IPR008062">
    <property type="entry name" value="KCNJ13"/>
</dbReference>
<dbReference type="InterPro" id="IPR040445">
    <property type="entry name" value="Kir_TM"/>
</dbReference>
<dbReference type="PANTHER" id="PTHR11767">
    <property type="entry name" value="INWARD RECTIFIER POTASSIUM CHANNEL"/>
    <property type="match status" value="1"/>
</dbReference>
<dbReference type="PANTHER" id="PTHR11767:SF3">
    <property type="entry name" value="INWARD RECTIFIER POTASSIUM CHANNEL 13"/>
    <property type="match status" value="1"/>
</dbReference>
<dbReference type="Pfam" id="PF01007">
    <property type="entry name" value="IRK"/>
    <property type="match status" value="1"/>
</dbReference>
<dbReference type="Pfam" id="PF17655">
    <property type="entry name" value="IRK_C"/>
    <property type="match status" value="1"/>
</dbReference>
<dbReference type="PIRSF" id="PIRSF005465">
    <property type="entry name" value="GIRK_kir"/>
    <property type="match status" value="1"/>
</dbReference>
<dbReference type="PRINTS" id="PR01679">
    <property type="entry name" value="KIR7CHANNEL"/>
</dbReference>
<dbReference type="PRINTS" id="PR01320">
    <property type="entry name" value="KIRCHANNEL"/>
</dbReference>
<dbReference type="SUPFAM" id="SSF81296">
    <property type="entry name" value="E set domains"/>
    <property type="match status" value="1"/>
</dbReference>
<dbReference type="SUPFAM" id="SSF81324">
    <property type="entry name" value="Voltage-gated potassium channels"/>
    <property type="match status" value="1"/>
</dbReference>
<accession>P86046</accession>
<comment type="function">
    <text evidence="2">Inward rectifier potassium channels are characterized by a greater tendency to allow potassium to flow into the cell rather than out of it. Their voltage dependence is regulated by the concentration of extracellular potassium; as external potassium is raised, the voltage range of the channel opening shifts to more positive voltages. The inward rectification is mainly due to the blockage of outward current by internal magnesium. KCNJ13 has a very low single channel conductance, low sensitivity to block by external barium and cesium, and no dependence of its inward rectification properties on the internal blocking particle magnesium.</text>
</comment>
<comment type="catalytic activity">
    <reaction evidence="6">
        <text>K(+)(in) = K(+)(out)</text>
        <dbReference type="Rhea" id="RHEA:29463"/>
        <dbReference type="ChEBI" id="CHEBI:29103"/>
    </reaction>
</comment>
<comment type="activity regulation">
    <text evidence="2">Inhibited by Ba(2+) and Cs(+), although sensitivity to those inhibitors is much lower than in other Kir channels.</text>
</comment>
<comment type="subunit">
    <text evidence="1 3">Homotetramer. Interacts with RAB28; the interaction may facilitate cone outer segments phagocytosis (By similarity).</text>
</comment>
<comment type="subcellular location">
    <subcellularLocation>
        <location evidence="4">Membrane</location>
        <topology evidence="4">Multi-pass membrane protein</topology>
    </subcellularLocation>
    <subcellularLocation>
        <location evidence="6">Cell membrane</location>
    </subcellularLocation>
    <text evidence="5">Localized at the retinal pigmented epithelium (RPE) apical microvilli.</text>
</comment>
<comment type="tissue specificity">
    <text evidence="5">Expressed in retina.</text>
</comment>
<comment type="PTM">
    <text evidence="2">Phosphorylation at Ser-287 by PKA increases ionic currents.</text>
</comment>
<comment type="similarity">
    <text evidence="7">Belongs to the inward rectifier-type potassium channel (TC 1.A.2.1) family. KCNJ13 subfamily.</text>
</comment>
<feature type="chain" id="PRO_0000355142" description="Inward rectifier potassium channel 13">
    <location>
        <begin position="1"/>
        <end position="360"/>
    </location>
</feature>
<feature type="topological domain" description="Cytoplasmic" evidence="3">
    <location>
        <begin position="1"/>
        <end position="50"/>
    </location>
</feature>
<feature type="transmembrane region" description="Helical; Name=M1" evidence="3">
    <location>
        <begin position="51"/>
        <end position="77"/>
    </location>
</feature>
<feature type="topological domain" description="Extracellular" evidence="3">
    <location>
        <begin position="78"/>
        <end position="105"/>
    </location>
</feature>
<feature type="intramembrane region" description="Helical; Pore-forming" evidence="3">
    <location>
        <begin position="106"/>
        <end position="122"/>
    </location>
</feature>
<feature type="topological domain" description="Extracellular" evidence="3">
    <location>
        <begin position="123"/>
        <end position="131"/>
    </location>
</feature>
<feature type="transmembrane region" description="Helical; Name=M2" evidence="3">
    <location>
        <begin position="132"/>
        <end position="157"/>
    </location>
</feature>
<feature type="topological domain" description="Cytoplasmic" evidence="3">
    <location>
        <begin position="158"/>
        <end position="360"/>
    </location>
</feature>
<feature type="short sequence motif" description="Selectivity filter" evidence="7">
    <location>
        <begin position="119"/>
        <end position="124"/>
    </location>
</feature>
<feature type="site" description="Role in the control of polyamine-mediated channel gating and in the blocking by intracellular magnesium" evidence="2">
    <location>
        <position position="149"/>
    </location>
</feature>
<feature type="modified residue" description="Phosphoserine; by PKA" evidence="2">
    <location>
        <position position="287"/>
    </location>
</feature>
<proteinExistence type="evidence at transcript level"/>
<gene>
    <name evidence="8" type="primary">Kcnj13</name>
</gene>
<organism>
    <name type="scientific">Mus musculus</name>
    <name type="common">Mouse</name>
    <dbReference type="NCBI Taxonomy" id="10090"/>
    <lineage>
        <taxon>Eukaryota</taxon>
        <taxon>Metazoa</taxon>
        <taxon>Chordata</taxon>
        <taxon>Craniata</taxon>
        <taxon>Vertebrata</taxon>
        <taxon>Euteleostomi</taxon>
        <taxon>Mammalia</taxon>
        <taxon>Eutheria</taxon>
        <taxon>Euarchontoglires</taxon>
        <taxon>Glires</taxon>
        <taxon>Rodentia</taxon>
        <taxon>Myomorpha</taxon>
        <taxon>Muroidea</taxon>
        <taxon>Muridae</taxon>
        <taxon>Murinae</taxon>
        <taxon>Mus</taxon>
        <taxon>Mus</taxon>
    </lineage>
</organism>